<name>RS16_SHESM</name>
<accession>Q0HGA8</accession>
<dbReference type="EMBL" id="CP000446">
    <property type="protein sequence ID" value="ABI39909.1"/>
    <property type="molecule type" value="Genomic_DNA"/>
</dbReference>
<dbReference type="RefSeq" id="WP_011623588.1">
    <property type="nucleotide sequence ID" value="NC_008321.1"/>
</dbReference>
<dbReference type="SMR" id="Q0HGA8"/>
<dbReference type="KEGG" id="she:Shewmr4_2838"/>
<dbReference type="HOGENOM" id="CLU_100590_5_1_6"/>
<dbReference type="GO" id="GO:0005737">
    <property type="term" value="C:cytoplasm"/>
    <property type="evidence" value="ECO:0007669"/>
    <property type="project" value="UniProtKB-ARBA"/>
</dbReference>
<dbReference type="GO" id="GO:0015935">
    <property type="term" value="C:small ribosomal subunit"/>
    <property type="evidence" value="ECO:0007669"/>
    <property type="project" value="TreeGrafter"/>
</dbReference>
<dbReference type="GO" id="GO:0003735">
    <property type="term" value="F:structural constituent of ribosome"/>
    <property type="evidence" value="ECO:0007669"/>
    <property type="project" value="InterPro"/>
</dbReference>
<dbReference type="GO" id="GO:0006412">
    <property type="term" value="P:translation"/>
    <property type="evidence" value="ECO:0007669"/>
    <property type="project" value="UniProtKB-UniRule"/>
</dbReference>
<dbReference type="FunFam" id="3.30.1320.10:FF:000001">
    <property type="entry name" value="30S ribosomal protein S16"/>
    <property type="match status" value="1"/>
</dbReference>
<dbReference type="Gene3D" id="3.30.1320.10">
    <property type="match status" value="1"/>
</dbReference>
<dbReference type="HAMAP" id="MF_00385">
    <property type="entry name" value="Ribosomal_bS16"/>
    <property type="match status" value="1"/>
</dbReference>
<dbReference type="InterPro" id="IPR000307">
    <property type="entry name" value="Ribosomal_bS16"/>
</dbReference>
<dbReference type="InterPro" id="IPR020592">
    <property type="entry name" value="Ribosomal_bS16_CS"/>
</dbReference>
<dbReference type="InterPro" id="IPR023803">
    <property type="entry name" value="Ribosomal_bS16_dom_sf"/>
</dbReference>
<dbReference type="NCBIfam" id="TIGR00002">
    <property type="entry name" value="S16"/>
    <property type="match status" value="1"/>
</dbReference>
<dbReference type="PANTHER" id="PTHR12919">
    <property type="entry name" value="30S RIBOSOMAL PROTEIN S16"/>
    <property type="match status" value="1"/>
</dbReference>
<dbReference type="PANTHER" id="PTHR12919:SF20">
    <property type="entry name" value="SMALL RIBOSOMAL SUBUNIT PROTEIN BS16M"/>
    <property type="match status" value="1"/>
</dbReference>
<dbReference type="Pfam" id="PF00886">
    <property type="entry name" value="Ribosomal_S16"/>
    <property type="match status" value="1"/>
</dbReference>
<dbReference type="SUPFAM" id="SSF54565">
    <property type="entry name" value="Ribosomal protein S16"/>
    <property type="match status" value="1"/>
</dbReference>
<dbReference type="PROSITE" id="PS00732">
    <property type="entry name" value="RIBOSOMAL_S16"/>
    <property type="match status" value="1"/>
</dbReference>
<protein>
    <recommendedName>
        <fullName evidence="1">Small ribosomal subunit protein bS16</fullName>
    </recommendedName>
    <alternativeName>
        <fullName evidence="2">30S ribosomal protein S16</fullName>
    </alternativeName>
</protein>
<gene>
    <name evidence="1" type="primary">rpsP</name>
    <name type="ordered locus">Shewmr4_2838</name>
</gene>
<organism>
    <name type="scientific">Shewanella sp. (strain MR-4)</name>
    <dbReference type="NCBI Taxonomy" id="60480"/>
    <lineage>
        <taxon>Bacteria</taxon>
        <taxon>Pseudomonadati</taxon>
        <taxon>Pseudomonadota</taxon>
        <taxon>Gammaproteobacteria</taxon>
        <taxon>Alteromonadales</taxon>
        <taxon>Shewanellaceae</taxon>
        <taxon>Shewanella</taxon>
    </lineage>
</organism>
<feature type="chain" id="PRO_1000049350" description="Small ribosomal subunit protein bS16">
    <location>
        <begin position="1"/>
        <end position="82"/>
    </location>
</feature>
<evidence type="ECO:0000255" key="1">
    <source>
        <dbReference type="HAMAP-Rule" id="MF_00385"/>
    </source>
</evidence>
<evidence type="ECO:0000305" key="2"/>
<reference key="1">
    <citation type="submission" date="2006-08" db="EMBL/GenBank/DDBJ databases">
        <title>Complete sequence of Shewanella sp. MR-4.</title>
        <authorList>
            <consortium name="US DOE Joint Genome Institute"/>
            <person name="Copeland A."/>
            <person name="Lucas S."/>
            <person name="Lapidus A."/>
            <person name="Barry K."/>
            <person name="Detter J.C."/>
            <person name="Glavina del Rio T."/>
            <person name="Hammon N."/>
            <person name="Israni S."/>
            <person name="Dalin E."/>
            <person name="Tice H."/>
            <person name="Pitluck S."/>
            <person name="Kiss H."/>
            <person name="Brettin T."/>
            <person name="Bruce D."/>
            <person name="Han C."/>
            <person name="Tapia R."/>
            <person name="Gilna P."/>
            <person name="Schmutz J."/>
            <person name="Larimer F."/>
            <person name="Land M."/>
            <person name="Hauser L."/>
            <person name="Kyrpides N."/>
            <person name="Mikhailova N."/>
            <person name="Nealson K."/>
            <person name="Konstantinidis K."/>
            <person name="Klappenbach J."/>
            <person name="Tiedje J."/>
            <person name="Richardson P."/>
        </authorList>
    </citation>
    <scope>NUCLEOTIDE SEQUENCE [LARGE SCALE GENOMIC DNA]</scope>
    <source>
        <strain>MR-4</strain>
    </source>
</reference>
<proteinExistence type="inferred from homology"/>
<keyword id="KW-0687">Ribonucleoprotein</keyword>
<keyword id="KW-0689">Ribosomal protein</keyword>
<comment type="similarity">
    <text evidence="1">Belongs to the bacterial ribosomal protein bS16 family.</text>
</comment>
<sequence length="82" mass="9124">MVTIRLARGGAKKRPFYNIVVADSRNARDGRFIERVGFFNPLARGQEETLRLDLARVEHWVSNGAATTDRVAKLIKDAKAAA</sequence>